<dbReference type="EC" id="2.1.1.192" evidence="1"/>
<dbReference type="EMBL" id="CP000510">
    <property type="protein sequence ID" value="ABM03001.1"/>
    <property type="molecule type" value="Genomic_DNA"/>
</dbReference>
<dbReference type="RefSeq" id="WP_011769564.1">
    <property type="nucleotide sequence ID" value="NC_008709.1"/>
</dbReference>
<dbReference type="SMR" id="A1SU36"/>
<dbReference type="STRING" id="357804.Ping_1165"/>
<dbReference type="KEGG" id="pin:Ping_1165"/>
<dbReference type="eggNOG" id="COG0820">
    <property type="taxonomic scope" value="Bacteria"/>
</dbReference>
<dbReference type="HOGENOM" id="CLU_029101_0_0_6"/>
<dbReference type="OrthoDB" id="9793973at2"/>
<dbReference type="Proteomes" id="UP000000639">
    <property type="component" value="Chromosome"/>
</dbReference>
<dbReference type="GO" id="GO:0005737">
    <property type="term" value="C:cytoplasm"/>
    <property type="evidence" value="ECO:0007669"/>
    <property type="project" value="UniProtKB-SubCell"/>
</dbReference>
<dbReference type="GO" id="GO:0051539">
    <property type="term" value="F:4 iron, 4 sulfur cluster binding"/>
    <property type="evidence" value="ECO:0007669"/>
    <property type="project" value="UniProtKB-UniRule"/>
</dbReference>
<dbReference type="GO" id="GO:0046872">
    <property type="term" value="F:metal ion binding"/>
    <property type="evidence" value="ECO:0007669"/>
    <property type="project" value="UniProtKB-KW"/>
</dbReference>
<dbReference type="GO" id="GO:0070040">
    <property type="term" value="F:rRNA (adenine(2503)-C2-)-methyltransferase activity"/>
    <property type="evidence" value="ECO:0007669"/>
    <property type="project" value="UniProtKB-UniRule"/>
</dbReference>
<dbReference type="GO" id="GO:0019843">
    <property type="term" value="F:rRNA binding"/>
    <property type="evidence" value="ECO:0007669"/>
    <property type="project" value="UniProtKB-UniRule"/>
</dbReference>
<dbReference type="GO" id="GO:0002935">
    <property type="term" value="F:tRNA (adenine(37)-C2)-methyltransferase activity"/>
    <property type="evidence" value="ECO:0007669"/>
    <property type="project" value="UniProtKB-UniRule"/>
</dbReference>
<dbReference type="GO" id="GO:0000049">
    <property type="term" value="F:tRNA binding"/>
    <property type="evidence" value="ECO:0007669"/>
    <property type="project" value="UniProtKB-UniRule"/>
</dbReference>
<dbReference type="GO" id="GO:0070475">
    <property type="term" value="P:rRNA base methylation"/>
    <property type="evidence" value="ECO:0007669"/>
    <property type="project" value="UniProtKB-UniRule"/>
</dbReference>
<dbReference type="GO" id="GO:0030488">
    <property type="term" value="P:tRNA methylation"/>
    <property type="evidence" value="ECO:0007669"/>
    <property type="project" value="UniProtKB-UniRule"/>
</dbReference>
<dbReference type="CDD" id="cd01335">
    <property type="entry name" value="Radical_SAM"/>
    <property type="match status" value="1"/>
</dbReference>
<dbReference type="FunFam" id="1.10.150.530:FF:000003">
    <property type="entry name" value="Dual-specificity RNA methyltransferase RlmN"/>
    <property type="match status" value="1"/>
</dbReference>
<dbReference type="FunFam" id="3.20.20.70:FF:000008">
    <property type="entry name" value="Dual-specificity RNA methyltransferase RlmN"/>
    <property type="match status" value="1"/>
</dbReference>
<dbReference type="Gene3D" id="1.10.150.530">
    <property type="match status" value="1"/>
</dbReference>
<dbReference type="Gene3D" id="3.20.20.70">
    <property type="entry name" value="Aldolase class I"/>
    <property type="match status" value="1"/>
</dbReference>
<dbReference type="HAMAP" id="MF_01849">
    <property type="entry name" value="RNA_methyltr_RlmN"/>
    <property type="match status" value="1"/>
</dbReference>
<dbReference type="InterPro" id="IPR013785">
    <property type="entry name" value="Aldolase_TIM"/>
</dbReference>
<dbReference type="InterPro" id="IPR040072">
    <property type="entry name" value="Methyltransferase_A"/>
</dbReference>
<dbReference type="InterPro" id="IPR048641">
    <property type="entry name" value="RlmN_N"/>
</dbReference>
<dbReference type="InterPro" id="IPR027492">
    <property type="entry name" value="RNA_MTrfase_RlmN"/>
</dbReference>
<dbReference type="InterPro" id="IPR004383">
    <property type="entry name" value="rRNA_lsu_MTrfase_RlmN/Cfr"/>
</dbReference>
<dbReference type="InterPro" id="IPR007197">
    <property type="entry name" value="rSAM"/>
</dbReference>
<dbReference type="NCBIfam" id="NF008396">
    <property type="entry name" value="PRK11194.1"/>
    <property type="match status" value="1"/>
</dbReference>
<dbReference type="NCBIfam" id="TIGR00048">
    <property type="entry name" value="rRNA_mod_RlmN"/>
    <property type="match status" value="1"/>
</dbReference>
<dbReference type="PANTHER" id="PTHR30544">
    <property type="entry name" value="23S RRNA METHYLTRANSFERASE"/>
    <property type="match status" value="1"/>
</dbReference>
<dbReference type="PANTHER" id="PTHR30544:SF5">
    <property type="entry name" value="RADICAL SAM CORE DOMAIN-CONTAINING PROTEIN"/>
    <property type="match status" value="1"/>
</dbReference>
<dbReference type="Pfam" id="PF04055">
    <property type="entry name" value="Radical_SAM"/>
    <property type="match status" value="1"/>
</dbReference>
<dbReference type="Pfam" id="PF21016">
    <property type="entry name" value="RlmN_N"/>
    <property type="match status" value="1"/>
</dbReference>
<dbReference type="PIRSF" id="PIRSF006004">
    <property type="entry name" value="CHP00048"/>
    <property type="match status" value="1"/>
</dbReference>
<dbReference type="SFLD" id="SFLDF00275">
    <property type="entry name" value="adenosine_C2_methyltransferase"/>
    <property type="match status" value="1"/>
</dbReference>
<dbReference type="SFLD" id="SFLDS00029">
    <property type="entry name" value="Radical_SAM"/>
    <property type="match status" value="1"/>
</dbReference>
<dbReference type="SUPFAM" id="SSF102114">
    <property type="entry name" value="Radical SAM enzymes"/>
    <property type="match status" value="1"/>
</dbReference>
<dbReference type="PROSITE" id="PS51918">
    <property type="entry name" value="RADICAL_SAM"/>
    <property type="match status" value="1"/>
</dbReference>
<keyword id="KW-0004">4Fe-4S</keyword>
<keyword id="KW-0963">Cytoplasm</keyword>
<keyword id="KW-1015">Disulfide bond</keyword>
<keyword id="KW-0408">Iron</keyword>
<keyword id="KW-0411">Iron-sulfur</keyword>
<keyword id="KW-0479">Metal-binding</keyword>
<keyword id="KW-0489">Methyltransferase</keyword>
<keyword id="KW-1185">Reference proteome</keyword>
<keyword id="KW-0698">rRNA processing</keyword>
<keyword id="KW-0949">S-adenosyl-L-methionine</keyword>
<keyword id="KW-0808">Transferase</keyword>
<keyword id="KW-0819">tRNA processing</keyword>
<proteinExistence type="inferred from homology"/>
<reference key="1">
    <citation type="journal article" date="2008" name="BMC Genomics">
        <title>Genomics of an extreme psychrophile, Psychromonas ingrahamii.</title>
        <authorList>
            <person name="Riley M."/>
            <person name="Staley J.T."/>
            <person name="Danchin A."/>
            <person name="Wang T.Z."/>
            <person name="Brettin T.S."/>
            <person name="Hauser L.J."/>
            <person name="Land M.L."/>
            <person name="Thompson L.S."/>
        </authorList>
    </citation>
    <scope>NUCLEOTIDE SEQUENCE [LARGE SCALE GENOMIC DNA]</scope>
    <source>
        <strain>DSM 17664 / CCUG 51855 / 37</strain>
    </source>
</reference>
<sequence>MNIKKVNLLDLNREGLRAFFVELGEKPFRAEQVMKWIYHYGCEDFDLMSNVNKKLRQKLKECAEIVAPEIKVEQRSNDGTIKWAMTVGDQEVETVYIPEKDRATLCISSQVGCVLACNFCSTAQQGFNRNLSVSEIIGQVWRAAKIVGVTGESGKRPITNVVMMGMGEPLLNLNNLIPAMELMLDDFGYALSKRRVTVSTSGVVPALDILGDRIDVSLAISLHAANDTLRSQMMPINDKYNIADFLAGVKRYIAKSKANRGKVYIEYLLLDHFNDSTDQAHELAILLKDTPCKINLIPFNPFPGNDYQKPSNSRVDRFNKVLMEYGYTVTVRKTRGDDIDAACGQLVGDVIDRTKRTMKKRLQGENIAISAG</sequence>
<feature type="chain" id="PRO_0000350352" description="Dual-specificity RNA methyltransferase RlmN">
    <location>
        <begin position="1"/>
        <end position="372"/>
    </location>
</feature>
<feature type="domain" description="Radical SAM core" evidence="2">
    <location>
        <begin position="99"/>
        <end position="338"/>
    </location>
</feature>
<feature type="active site" description="Proton acceptor" evidence="1">
    <location>
        <position position="93"/>
    </location>
</feature>
<feature type="active site" description="S-methylcysteine intermediate" evidence="1">
    <location>
        <position position="343"/>
    </location>
</feature>
<feature type="binding site" evidence="1">
    <location>
        <position position="113"/>
    </location>
    <ligand>
        <name>[4Fe-4S] cluster</name>
        <dbReference type="ChEBI" id="CHEBI:49883"/>
        <note>4Fe-4S-S-AdoMet</note>
    </ligand>
</feature>
<feature type="binding site" evidence="1">
    <location>
        <position position="117"/>
    </location>
    <ligand>
        <name>[4Fe-4S] cluster</name>
        <dbReference type="ChEBI" id="CHEBI:49883"/>
        <note>4Fe-4S-S-AdoMet</note>
    </ligand>
</feature>
<feature type="binding site" evidence="1">
    <location>
        <position position="120"/>
    </location>
    <ligand>
        <name>[4Fe-4S] cluster</name>
        <dbReference type="ChEBI" id="CHEBI:49883"/>
        <note>4Fe-4S-S-AdoMet</note>
    </ligand>
</feature>
<feature type="binding site" evidence="1">
    <location>
        <begin position="167"/>
        <end position="168"/>
    </location>
    <ligand>
        <name>S-adenosyl-L-methionine</name>
        <dbReference type="ChEBI" id="CHEBI:59789"/>
    </ligand>
</feature>
<feature type="binding site" evidence="1">
    <location>
        <position position="199"/>
    </location>
    <ligand>
        <name>S-adenosyl-L-methionine</name>
        <dbReference type="ChEBI" id="CHEBI:59789"/>
    </ligand>
</feature>
<feature type="binding site" evidence="1">
    <location>
        <begin position="221"/>
        <end position="223"/>
    </location>
    <ligand>
        <name>S-adenosyl-L-methionine</name>
        <dbReference type="ChEBI" id="CHEBI:59789"/>
    </ligand>
</feature>
<feature type="binding site" evidence="1">
    <location>
        <position position="300"/>
    </location>
    <ligand>
        <name>S-adenosyl-L-methionine</name>
        <dbReference type="ChEBI" id="CHEBI:59789"/>
    </ligand>
</feature>
<feature type="disulfide bond" description="(transient)" evidence="1">
    <location>
        <begin position="106"/>
        <end position="343"/>
    </location>
</feature>
<comment type="function">
    <text evidence="1">Specifically methylates position 2 of adenine 2503 in 23S rRNA and position 2 of adenine 37 in tRNAs. m2A2503 modification seems to play a crucial role in the proofreading step occurring at the peptidyl transferase center and thus would serve to optimize ribosomal fidelity.</text>
</comment>
<comment type="catalytic activity">
    <reaction evidence="1">
        <text>adenosine(2503) in 23S rRNA + 2 reduced [2Fe-2S]-[ferredoxin] + 2 S-adenosyl-L-methionine = 2-methyladenosine(2503) in 23S rRNA + 5'-deoxyadenosine + L-methionine + 2 oxidized [2Fe-2S]-[ferredoxin] + S-adenosyl-L-homocysteine</text>
        <dbReference type="Rhea" id="RHEA:42916"/>
        <dbReference type="Rhea" id="RHEA-COMP:10000"/>
        <dbReference type="Rhea" id="RHEA-COMP:10001"/>
        <dbReference type="Rhea" id="RHEA-COMP:10152"/>
        <dbReference type="Rhea" id="RHEA-COMP:10282"/>
        <dbReference type="ChEBI" id="CHEBI:17319"/>
        <dbReference type="ChEBI" id="CHEBI:33737"/>
        <dbReference type="ChEBI" id="CHEBI:33738"/>
        <dbReference type="ChEBI" id="CHEBI:57844"/>
        <dbReference type="ChEBI" id="CHEBI:57856"/>
        <dbReference type="ChEBI" id="CHEBI:59789"/>
        <dbReference type="ChEBI" id="CHEBI:74411"/>
        <dbReference type="ChEBI" id="CHEBI:74497"/>
        <dbReference type="EC" id="2.1.1.192"/>
    </reaction>
</comment>
<comment type="catalytic activity">
    <reaction evidence="1">
        <text>adenosine(37) in tRNA + 2 reduced [2Fe-2S]-[ferredoxin] + 2 S-adenosyl-L-methionine = 2-methyladenosine(37) in tRNA + 5'-deoxyadenosine + L-methionine + 2 oxidized [2Fe-2S]-[ferredoxin] + S-adenosyl-L-homocysteine</text>
        <dbReference type="Rhea" id="RHEA:43332"/>
        <dbReference type="Rhea" id="RHEA-COMP:10000"/>
        <dbReference type="Rhea" id="RHEA-COMP:10001"/>
        <dbReference type="Rhea" id="RHEA-COMP:10162"/>
        <dbReference type="Rhea" id="RHEA-COMP:10485"/>
        <dbReference type="ChEBI" id="CHEBI:17319"/>
        <dbReference type="ChEBI" id="CHEBI:33737"/>
        <dbReference type="ChEBI" id="CHEBI:33738"/>
        <dbReference type="ChEBI" id="CHEBI:57844"/>
        <dbReference type="ChEBI" id="CHEBI:57856"/>
        <dbReference type="ChEBI" id="CHEBI:59789"/>
        <dbReference type="ChEBI" id="CHEBI:74411"/>
        <dbReference type="ChEBI" id="CHEBI:74497"/>
        <dbReference type="EC" id="2.1.1.192"/>
    </reaction>
</comment>
<comment type="cofactor">
    <cofactor evidence="1">
        <name>[4Fe-4S] cluster</name>
        <dbReference type="ChEBI" id="CHEBI:49883"/>
    </cofactor>
    <text evidence="1">Binds 1 [4Fe-4S] cluster. The cluster is coordinated with 3 cysteines and an exchangeable S-adenosyl-L-methionine.</text>
</comment>
<comment type="subcellular location">
    <subcellularLocation>
        <location evidence="1">Cytoplasm</location>
    </subcellularLocation>
</comment>
<comment type="miscellaneous">
    <text evidence="1">Reaction proceeds by a ping-pong mechanism involving intermediate methylation of a conserved cysteine residue.</text>
</comment>
<comment type="similarity">
    <text evidence="1">Belongs to the radical SAM superfamily. RlmN family.</text>
</comment>
<name>RLMN_PSYIN</name>
<protein>
    <recommendedName>
        <fullName evidence="1">Dual-specificity RNA methyltransferase RlmN</fullName>
        <ecNumber evidence="1">2.1.1.192</ecNumber>
    </recommendedName>
    <alternativeName>
        <fullName evidence="1">23S rRNA (adenine(2503)-C(2))-methyltransferase</fullName>
    </alternativeName>
    <alternativeName>
        <fullName evidence="1">23S rRNA m2A2503 methyltransferase</fullName>
    </alternativeName>
    <alternativeName>
        <fullName evidence="1">Ribosomal RNA large subunit methyltransferase N</fullName>
    </alternativeName>
    <alternativeName>
        <fullName evidence="1">tRNA (adenine(37)-C(2))-methyltransferase</fullName>
    </alternativeName>
    <alternativeName>
        <fullName evidence="1">tRNA m2A37 methyltransferase</fullName>
    </alternativeName>
</protein>
<evidence type="ECO:0000255" key="1">
    <source>
        <dbReference type="HAMAP-Rule" id="MF_01849"/>
    </source>
</evidence>
<evidence type="ECO:0000255" key="2">
    <source>
        <dbReference type="PROSITE-ProRule" id="PRU01266"/>
    </source>
</evidence>
<gene>
    <name evidence="1" type="primary">rlmN</name>
    <name type="ordered locus">Ping_1165</name>
</gene>
<accession>A1SU36</accession>
<organism>
    <name type="scientific">Psychromonas ingrahamii (strain DSM 17664 / CCUG 51855 / 37)</name>
    <dbReference type="NCBI Taxonomy" id="357804"/>
    <lineage>
        <taxon>Bacteria</taxon>
        <taxon>Pseudomonadati</taxon>
        <taxon>Pseudomonadota</taxon>
        <taxon>Gammaproteobacteria</taxon>
        <taxon>Alteromonadales</taxon>
        <taxon>Psychromonadaceae</taxon>
        <taxon>Psychromonas</taxon>
    </lineage>
</organism>